<keyword id="KW-0028">Amino-acid biosynthesis</keyword>
<keyword id="KW-0057">Aromatic amino acid biosynthesis</keyword>
<keyword id="KW-0067">ATP-binding</keyword>
<keyword id="KW-0963">Cytoplasm</keyword>
<keyword id="KW-0418">Kinase</keyword>
<keyword id="KW-0460">Magnesium</keyword>
<keyword id="KW-0479">Metal-binding</keyword>
<keyword id="KW-0547">Nucleotide-binding</keyword>
<keyword id="KW-1185">Reference proteome</keyword>
<keyword id="KW-0808">Transferase</keyword>
<evidence type="ECO:0000255" key="1">
    <source>
        <dbReference type="HAMAP-Rule" id="MF_00109"/>
    </source>
</evidence>
<evidence type="ECO:0000256" key="2">
    <source>
        <dbReference type="SAM" id="MobiDB-lite"/>
    </source>
</evidence>
<reference key="1">
    <citation type="journal article" date="2008" name="Genome Res.">
        <title>Insights from the complete genome sequence of Mycobacterium marinum on the evolution of Mycobacterium tuberculosis.</title>
        <authorList>
            <person name="Stinear T.P."/>
            <person name="Seemann T."/>
            <person name="Harrison P.F."/>
            <person name="Jenkin G.A."/>
            <person name="Davies J.K."/>
            <person name="Johnson P.D."/>
            <person name="Abdellah Z."/>
            <person name="Arrowsmith C."/>
            <person name="Chillingworth T."/>
            <person name="Churcher C."/>
            <person name="Clarke K."/>
            <person name="Cronin A."/>
            <person name="Davis P."/>
            <person name="Goodhead I."/>
            <person name="Holroyd N."/>
            <person name="Jagels K."/>
            <person name="Lord A."/>
            <person name="Moule S."/>
            <person name="Mungall K."/>
            <person name="Norbertczak H."/>
            <person name="Quail M.A."/>
            <person name="Rabbinowitsch E."/>
            <person name="Walker D."/>
            <person name="White B."/>
            <person name="Whitehead S."/>
            <person name="Small P.L."/>
            <person name="Brosch R."/>
            <person name="Ramakrishnan L."/>
            <person name="Fischbach M.A."/>
            <person name="Parkhill J."/>
            <person name="Cole S.T."/>
        </authorList>
    </citation>
    <scope>NUCLEOTIDE SEQUENCE [LARGE SCALE GENOMIC DNA]</scope>
    <source>
        <strain>ATCC BAA-535 / M</strain>
    </source>
</reference>
<sequence>MAPKAVLVGLPGSGKSTIGRRLAKALGVGLLDTDAAIEQQAGRSIAEIFATDGEEEFRRIEEEVVRAALADHDGVLSLGGGAVTSPGVRSALDGHTVVYLEISAAEGVRRTGGSNVRPLLAGPDRAEKFRALMSQRIPLYRRVSTIRVDTNRRNPGAVVRYIMSRLDDPTPNTSPSSTASGAAT</sequence>
<protein>
    <recommendedName>
        <fullName evidence="1">Shikimate kinase</fullName>
        <shortName evidence="1">SK</shortName>
        <ecNumber evidence="1">2.7.1.71</ecNumber>
    </recommendedName>
</protein>
<dbReference type="EC" id="2.7.1.71" evidence="1"/>
<dbReference type="EMBL" id="CP000854">
    <property type="protein sequence ID" value="ACC40625.1"/>
    <property type="molecule type" value="Genomic_DNA"/>
</dbReference>
<dbReference type="RefSeq" id="WP_012393941.1">
    <property type="nucleotide sequence ID" value="NC_010612.1"/>
</dbReference>
<dbReference type="SMR" id="B2HNC7"/>
<dbReference type="STRING" id="216594.MMAR_2176"/>
<dbReference type="KEGG" id="mmi:MMAR_2176"/>
<dbReference type="eggNOG" id="COG0703">
    <property type="taxonomic scope" value="Bacteria"/>
</dbReference>
<dbReference type="HOGENOM" id="CLU_057607_3_3_11"/>
<dbReference type="OrthoDB" id="9800332at2"/>
<dbReference type="UniPathway" id="UPA00053">
    <property type="reaction ID" value="UER00088"/>
</dbReference>
<dbReference type="Proteomes" id="UP000001190">
    <property type="component" value="Chromosome"/>
</dbReference>
<dbReference type="GO" id="GO:0005829">
    <property type="term" value="C:cytosol"/>
    <property type="evidence" value="ECO:0007669"/>
    <property type="project" value="TreeGrafter"/>
</dbReference>
<dbReference type="GO" id="GO:0005524">
    <property type="term" value="F:ATP binding"/>
    <property type="evidence" value="ECO:0007669"/>
    <property type="project" value="UniProtKB-UniRule"/>
</dbReference>
<dbReference type="GO" id="GO:0000287">
    <property type="term" value="F:magnesium ion binding"/>
    <property type="evidence" value="ECO:0007669"/>
    <property type="project" value="UniProtKB-UniRule"/>
</dbReference>
<dbReference type="GO" id="GO:0004765">
    <property type="term" value="F:shikimate kinase activity"/>
    <property type="evidence" value="ECO:0007669"/>
    <property type="project" value="UniProtKB-UniRule"/>
</dbReference>
<dbReference type="GO" id="GO:0008652">
    <property type="term" value="P:amino acid biosynthetic process"/>
    <property type="evidence" value="ECO:0007669"/>
    <property type="project" value="UniProtKB-KW"/>
</dbReference>
<dbReference type="GO" id="GO:0009073">
    <property type="term" value="P:aromatic amino acid family biosynthetic process"/>
    <property type="evidence" value="ECO:0007669"/>
    <property type="project" value="UniProtKB-KW"/>
</dbReference>
<dbReference type="GO" id="GO:0009423">
    <property type="term" value="P:chorismate biosynthetic process"/>
    <property type="evidence" value="ECO:0007669"/>
    <property type="project" value="UniProtKB-UniRule"/>
</dbReference>
<dbReference type="CDD" id="cd00464">
    <property type="entry name" value="SK"/>
    <property type="match status" value="1"/>
</dbReference>
<dbReference type="Gene3D" id="3.40.50.300">
    <property type="entry name" value="P-loop containing nucleotide triphosphate hydrolases"/>
    <property type="match status" value="1"/>
</dbReference>
<dbReference type="HAMAP" id="MF_00109">
    <property type="entry name" value="Shikimate_kinase"/>
    <property type="match status" value="1"/>
</dbReference>
<dbReference type="InterPro" id="IPR027417">
    <property type="entry name" value="P-loop_NTPase"/>
</dbReference>
<dbReference type="InterPro" id="IPR031322">
    <property type="entry name" value="Shikimate/glucono_kinase"/>
</dbReference>
<dbReference type="InterPro" id="IPR000623">
    <property type="entry name" value="Shikimate_kinase/TSH1"/>
</dbReference>
<dbReference type="InterPro" id="IPR023000">
    <property type="entry name" value="Shikimate_kinase_CS"/>
</dbReference>
<dbReference type="PANTHER" id="PTHR21087">
    <property type="entry name" value="SHIKIMATE KINASE"/>
    <property type="match status" value="1"/>
</dbReference>
<dbReference type="PANTHER" id="PTHR21087:SF16">
    <property type="entry name" value="SHIKIMATE KINASE 1, CHLOROPLASTIC"/>
    <property type="match status" value="1"/>
</dbReference>
<dbReference type="Pfam" id="PF01202">
    <property type="entry name" value="SKI"/>
    <property type="match status" value="1"/>
</dbReference>
<dbReference type="PRINTS" id="PR01100">
    <property type="entry name" value="SHIKIMTKNASE"/>
</dbReference>
<dbReference type="SUPFAM" id="SSF52540">
    <property type="entry name" value="P-loop containing nucleoside triphosphate hydrolases"/>
    <property type="match status" value="1"/>
</dbReference>
<dbReference type="PROSITE" id="PS01128">
    <property type="entry name" value="SHIKIMATE_KINASE"/>
    <property type="match status" value="1"/>
</dbReference>
<name>AROK_MYCMM</name>
<accession>B2HNC7</accession>
<gene>
    <name evidence="1" type="primary">aroK</name>
    <name type="ordered locus">MMAR_2176</name>
</gene>
<organism>
    <name type="scientific">Mycobacterium marinum (strain ATCC BAA-535 / M)</name>
    <dbReference type="NCBI Taxonomy" id="216594"/>
    <lineage>
        <taxon>Bacteria</taxon>
        <taxon>Bacillati</taxon>
        <taxon>Actinomycetota</taxon>
        <taxon>Actinomycetes</taxon>
        <taxon>Mycobacteriales</taxon>
        <taxon>Mycobacteriaceae</taxon>
        <taxon>Mycobacterium</taxon>
        <taxon>Mycobacterium ulcerans group</taxon>
    </lineage>
</organism>
<comment type="function">
    <text evidence="1">Catalyzes the specific phosphorylation of the 3-hydroxyl group of shikimic acid using ATP as a cosubstrate.</text>
</comment>
<comment type="catalytic activity">
    <reaction evidence="1">
        <text>shikimate + ATP = 3-phosphoshikimate + ADP + H(+)</text>
        <dbReference type="Rhea" id="RHEA:13121"/>
        <dbReference type="ChEBI" id="CHEBI:15378"/>
        <dbReference type="ChEBI" id="CHEBI:30616"/>
        <dbReference type="ChEBI" id="CHEBI:36208"/>
        <dbReference type="ChEBI" id="CHEBI:145989"/>
        <dbReference type="ChEBI" id="CHEBI:456216"/>
        <dbReference type="EC" id="2.7.1.71"/>
    </reaction>
</comment>
<comment type="cofactor">
    <cofactor evidence="1">
        <name>Mg(2+)</name>
        <dbReference type="ChEBI" id="CHEBI:18420"/>
    </cofactor>
    <text evidence="1">Binds 1 Mg(2+) ion per subunit.</text>
</comment>
<comment type="pathway">
    <text evidence="1">Metabolic intermediate biosynthesis; chorismate biosynthesis; chorismate from D-erythrose 4-phosphate and phosphoenolpyruvate: step 5/7.</text>
</comment>
<comment type="subunit">
    <text evidence="1">Monomer.</text>
</comment>
<comment type="subcellular location">
    <subcellularLocation>
        <location evidence="1">Cytoplasm</location>
    </subcellularLocation>
</comment>
<comment type="similarity">
    <text evidence="1">Belongs to the shikimate kinase family.</text>
</comment>
<proteinExistence type="inferred from homology"/>
<feature type="chain" id="PRO_1000094399" description="Shikimate kinase">
    <location>
        <begin position="1"/>
        <end position="184"/>
    </location>
</feature>
<feature type="region of interest" description="Disordered" evidence="2">
    <location>
        <begin position="163"/>
        <end position="184"/>
    </location>
</feature>
<feature type="compositionally biased region" description="Low complexity" evidence="2">
    <location>
        <begin position="169"/>
        <end position="184"/>
    </location>
</feature>
<feature type="binding site" evidence="1">
    <location>
        <begin position="12"/>
        <end position="17"/>
    </location>
    <ligand>
        <name>ATP</name>
        <dbReference type="ChEBI" id="CHEBI:30616"/>
    </ligand>
</feature>
<feature type="binding site" evidence="1">
    <location>
        <position position="16"/>
    </location>
    <ligand>
        <name>Mg(2+)</name>
        <dbReference type="ChEBI" id="CHEBI:18420"/>
    </ligand>
</feature>
<feature type="binding site" evidence="1">
    <location>
        <position position="34"/>
    </location>
    <ligand>
        <name>substrate</name>
    </ligand>
</feature>
<feature type="binding site" evidence="1">
    <location>
        <position position="58"/>
    </location>
    <ligand>
        <name>substrate</name>
    </ligand>
</feature>
<feature type="binding site" evidence="1">
    <location>
        <position position="80"/>
    </location>
    <ligand>
        <name>substrate</name>
    </ligand>
</feature>
<feature type="binding site" evidence="1">
    <location>
        <position position="117"/>
    </location>
    <ligand>
        <name>ATP</name>
        <dbReference type="ChEBI" id="CHEBI:30616"/>
    </ligand>
</feature>
<feature type="binding site" evidence="1">
    <location>
        <position position="136"/>
    </location>
    <ligand>
        <name>substrate</name>
    </ligand>
</feature>
<feature type="binding site" evidence="1">
    <location>
        <position position="153"/>
    </location>
    <ligand>
        <name>ATP</name>
        <dbReference type="ChEBI" id="CHEBI:30616"/>
    </ligand>
</feature>